<organism>
    <name type="scientific">Escherichia coli (strain K12)</name>
    <dbReference type="NCBI Taxonomy" id="83333"/>
    <lineage>
        <taxon>Bacteria</taxon>
        <taxon>Pseudomonadati</taxon>
        <taxon>Pseudomonadota</taxon>
        <taxon>Gammaproteobacteria</taxon>
        <taxon>Enterobacterales</taxon>
        <taxon>Enterobacteriaceae</taxon>
        <taxon>Escherichia</taxon>
    </lineage>
</organism>
<dbReference type="EC" id="3.4.24.-"/>
<dbReference type="EMBL" id="U00096">
    <property type="protein sequence ID" value="AAC74926.2"/>
    <property type="molecule type" value="Genomic_DNA"/>
</dbReference>
<dbReference type="EMBL" id="AP009048">
    <property type="protein sequence ID" value="BAA15664.2"/>
    <property type="molecule type" value="Genomic_DNA"/>
</dbReference>
<dbReference type="EMBL" id="U38702">
    <property type="protein sequence ID" value="AAA81029.1"/>
    <property type="status" value="ALT_INIT"/>
    <property type="molecule type" value="Genomic_DNA"/>
</dbReference>
<dbReference type="EMBL" id="M77039">
    <property type="protein sequence ID" value="AAA24180.1"/>
    <property type="molecule type" value="Genomic_DNA"/>
</dbReference>
<dbReference type="RefSeq" id="NP_416370.2">
    <property type="nucleotide sequence ID" value="NC_000913.3"/>
</dbReference>
<dbReference type="RefSeq" id="WP_001184045.1">
    <property type="nucleotide sequence ID" value="NZ_STEB01000009.1"/>
</dbReference>
<dbReference type="SMR" id="P0AFS9"/>
<dbReference type="BioGRID" id="4260352">
    <property type="interactions" value="403"/>
</dbReference>
<dbReference type="FunCoup" id="P0AFS9">
    <property type="interactions" value="149"/>
</dbReference>
<dbReference type="STRING" id="511145.b1856"/>
<dbReference type="MEROPS" id="M23.011"/>
<dbReference type="jPOST" id="P0AFS9"/>
<dbReference type="PaxDb" id="511145-b1856"/>
<dbReference type="EnsemblBacteria" id="AAC74926">
    <property type="protein sequence ID" value="AAC74926"/>
    <property type="gene ID" value="b1856"/>
</dbReference>
<dbReference type="GeneID" id="75202739"/>
<dbReference type="GeneID" id="946376"/>
<dbReference type="KEGG" id="ecj:JW5304"/>
<dbReference type="KEGG" id="eco:b1856"/>
<dbReference type="KEGG" id="ecoc:C3026_10575"/>
<dbReference type="PATRIC" id="fig|1411691.4.peg.392"/>
<dbReference type="EchoBASE" id="EB0013"/>
<dbReference type="eggNOG" id="COG0739">
    <property type="taxonomic scope" value="Bacteria"/>
</dbReference>
<dbReference type="HOGENOM" id="CLU_026846_0_2_6"/>
<dbReference type="InParanoid" id="P0AFS9"/>
<dbReference type="OMA" id="HVCYRFW"/>
<dbReference type="OrthoDB" id="9805070at2"/>
<dbReference type="PhylomeDB" id="P0AFS9"/>
<dbReference type="BioCyc" id="EcoCyc:EG10013-MONOMER"/>
<dbReference type="BioCyc" id="MetaCyc:EG10013-MONOMER"/>
<dbReference type="UniPathway" id="UPA00963"/>
<dbReference type="PRO" id="PR:P0AFS9"/>
<dbReference type="Proteomes" id="UP000000625">
    <property type="component" value="Chromosome"/>
</dbReference>
<dbReference type="GO" id="GO:0005886">
    <property type="term" value="C:plasma membrane"/>
    <property type="evidence" value="ECO:0007669"/>
    <property type="project" value="UniProtKB-SubCell"/>
</dbReference>
<dbReference type="GO" id="GO:0004175">
    <property type="term" value="F:endopeptidase activity"/>
    <property type="evidence" value="ECO:0000314"/>
    <property type="project" value="CACAO"/>
</dbReference>
<dbReference type="GO" id="GO:0046872">
    <property type="term" value="F:metal ion binding"/>
    <property type="evidence" value="ECO:0007669"/>
    <property type="project" value="UniProtKB-KW"/>
</dbReference>
<dbReference type="GO" id="GO:0004222">
    <property type="term" value="F:metalloendopeptidase activity"/>
    <property type="evidence" value="ECO:0000314"/>
    <property type="project" value="EcoCyc"/>
</dbReference>
<dbReference type="GO" id="GO:0045227">
    <property type="term" value="P:capsule polysaccharide biosynthetic process"/>
    <property type="evidence" value="ECO:0007669"/>
    <property type="project" value="UniProtKB-UniPathway"/>
</dbReference>
<dbReference type="GO" id="GO:0071555">
    <property type="term" value="P:cell wall organization"/>
    <property type="evidence" value="ECO:0007669"/>
    <property type="project" value="UniProtKB-KW"/>
</dbReference>
<dbReference type="GO" id="GO:0000270">
    <property type="term" value="P:peptidoglycan metabolic process"/>
    <property type="evidence" value="ECO:0000314"/>
    <property type="project" value="EcoCyc"/>
</dbReference>
<dbReference type="GO" id="GO:0009254">
    <property type="term" value="P:peptidoglycan turnover"/>
    <property type="evidence" value="ECO:0000315"/>
    <property type="project" value="CACAO"/>
</dbReference>
<dbReference type="GO" id="GO:0006508">
    <property type="term" value="P:proteolysis"/>
    <property type="evidence" value="ECO:0007669"/>
    <property type="project" value="UniProtKB-KW"/>
</dbReference>
<dbReference type="CDD" id="cd00118">
    <property type="entry name" value="LysM"/>
    <property type="match status" value="1"/>
</dbReference>
<dbReference type="CDD" id="cd12797">
    <property type="entry name" value="M23_peptidase"/>
    <property type="match status" value="1"/>
</dbReference>
<dbReference type="FunFam" id="2.70.70.10:FF:000002">
    <property type="entry name" value="Murein DD-endopeptidase MepM"/>
    <property type="match status" value="1"/>
</dbReference>
<dbReference type="FunFam" id="3.10.450.350:FF:000001">
    <property type="entry name" value="Murein DD-endopeptidase MepM"/>
    <property type="match status" value="1"/>
</dbReference>
<dbReference type="FunFam" id="3.10.450.350:FF:000002">
    <property type="entry name" value="Murein DD-endopeptidase MepM"/>
    <property type="match status" value="1"/>
</dbReference>
<dbReference type="Gene3D" id="3.10.450.350">
    <property type="match status" value="2"/>
</dbReference>
<dbReference type="Gene3D" id="2.70.70.10">
    <property type="entry name" value="Glucose Permease (Domain IIA)"/>
    <property type="match status" value="1"/>
</dbReference>
<dbReference type="InterPro" id="IPR050570">
    <property type="entry name" value="Cell_wall_metabolism_enzyme"/>
</dbReference>
<dbReference type="InterPro" id="IPR045834">
    <property type="entry name" value="Csd3_N2"/>
</dbReference>
<dbReference type="InterPro" id="IPR011055">
    <property type="entry name" value="Dup_hybrid_motif"/>
</dbReference>
<dbReference type="InterPro" id="IPR018392">
    <property type="entry name" value="LysM_dom"/>
</dbReference>
<dbReference type="InterPro" id="IPR036779">
    <property type="entry name" value="LysM_dom_sf"/>
</dbReference>
<dbReference type="InterPro" id="IPR013731">
    <property type="entry name" value="OapA_N"/>
</dbReference>
<dbReference type="InterPro" id="IPR016047">
    <property type="entry name" value="Peptidase_M23"/>
</dbReference>
<dbReference type="NCBIfam" id="NF008652">
    <property type="entry name" value="PRK11649.1"/>
    <property type="match status" value="1"/>
</dbReference>
<dbReference type="PANTHER" id="PTHR21666:SF292">
    <property type="entry name" value="MUREIN DD-ENDOPEPTIDASE MEPM"/>
    <property type="match status" value="1"/>
</dbReference>
<dbReference type="PANTHER" id="PTHR21666">
    <property type="entry name" value="PEPTIDASE-RELATED"/>
    <property type="match status" value="1"/>
</dbReference>
<dbReference type="Pfam" id="PF19425">
    <property type="entry name" value="Csd3_N2"/>
    <property type="match status" value="1"/>
</dbReference>
<dbReference type="Pfam" id="PF01476">
    <property type="entry name" value="LysM"/>
    <property type="match status" value="1"/>
</dbReference>
<dbReference type="Pfam" id="PF08525">
    <property type="entry name" value="OapA_N"/>
    <property type="match status" value="1"/>
</dbReference>
<dbReference type="Pfam" id="PF01551">
    <property type="entry name" value="Peptidase_M23"/>
    <property type="match status" value="1"/>
</dbReference>
<dbReference type="SMART" id="SM00257">
    <property type="entry name" value="LysM"/>
    <property type="match status" value="1"/>
</dbReference>
<dbReference type="SUPFAM" id="SSF51261">
    <property type="entry name" value="Duplicated hybrid motif"/>
    <property type="match status" value="1"/>
</dbReference>
<dbReference type="SUPFAM" id="SSF54106">
    <property type="entry name" value="LysM domain"/>
    <property type="match status" value="1"/>
</dbReference>
<dbReference type="PROSITE" id="PS51782">
    <property type="entry name" value="LYSM"/>
    <property type="match status" value="1"/>
</dbReference>
<proteinExistence type="evidence at protein level"/>
<keyword id="KW-0997">Cell inner membrane</keyword>
<keyword id="KW-1003">Cell membrane</keyword>
<keyword id="KW-0961">Cell wall biogenesis/degradation</keyword>
<keyword id="KW-0378">Hydrolase</keyword>
<keyword id="KW-0472">Membrane</keyword>
<keyword id="KW-0479">Metal-binding</keyword>
<keyword id="KW-0482">Metalloprotease</keyword>
<keyword id="KW-0645">Protease</keyword>
<keyword id="KW-1185">Reference proteome</keyword>
<keyword id="KW-0812">Transmembrane</keyword>
<keyword id="KW-1133">Transmembrane helix</keyword>
<keyword id="KW-0862">Zinc</keyword>
<sequence>MQQIARSVALAFNNLPRPHRVMLGSLTVLTLAVAVWRPYVYHRDATPIVKTIELEQNEIRSLLPEASEPIDQAAQEDEAIPQDELDDKIAGEAGVHEYVVSTGDTLSSILNQYGIDMGDITQLAAADKELRNLKIGQQLSWTLTADGELQRLTWEVSRRETRTYDRTAANGFKMTSEMQQGEWVNNLLKGTVGGSFVASARNAGLTSAEVSAVIKAMQWQMDFRKLKKGDEFAVLMSREMLDGKREQSQLLGVRLRSEGKDYYAIRAEDGKFYDRNGTGLAKGFLRFPTAKQFRISSNFNPRRTNPVTGRVAPHRGVDFAMPQGTPVLSVGDGEVVVAKRSGAAGYYVAIRHGRSYTTRYMHLRKILVKPGQKVKRGDRIALSGNTGRSTGPHLHYEVWINQQAVNPLTAKLPRTEGLTGSDRREFLAQAKEIVPQLRFD</sequence>
<protein>
    <recommendedName>
        <fullName>Murein DD-endopeptidase MepM</fullName>
        <ecNumber>3.4.24.-</ecNumber>
    </recommendedName>
    <alternativeName>
        <fullName>Murein hydrolase MepM</fullName>
    </alternativeName>
    <alternativeName>
        <fullName>ORFU</fullName>
    </alternativeName>
</protein>
<evidence type="ECO:0000255" key="1"/>
<evidence type="ECO:0000255" key="2">
    <source>
        <dbReference type="PROSITE-ProRule" id="PRU01118"/>
    </source>
</evidence>
<evidence type="ECO:0000269" key="3">
    <source>
    </source>
</evidence>
<evidence type="ECO:0000269" key="4">
    <source>
    </source>
</evidence>
<evidence type="ECO:0000305" key="5"/>
<name>MEPM_ECOLI</name>
<comment type="function">
    <text evidence="4">A murein DD-endopeptidase with specificity for D-Ala-meso-diaminopimelic acid (mDAP) cross-links. Its role is probably to cleave D-Ala-mDAP cross-links to allow insertion of new glycans and thus cell wall expansion. Functionally redundant with MepM and MepH. Partially suppresses an mepS disruption mutant.</text>
</comment>
<comment type="cofactor">
    <cofactor evidence="4">
        <name>Zn(2+)</name>
        <dbReference type="ChEBI" id="CHEBI:29105"/>
    </cofactor>
    <cofactor evidence="4">
        <name>Ca(2+)</name>
        <dbReference type="ChEBI" id="CHEBI:29108"/>
    </cofactor>
    <text evidence="4">Zinc, although calcium also allows some activity.</text>
</comment>
<comment type="pathway">
    <text>Cell wall biogenesis; cell wall polysaccharide biosynthesis.</text>
</comment>
<comment type="subcellular location">
    <subcellularLocation>
        <location evidence="5">Cell inner membrane</location>
        <topology evidence="5">Single-pass membrane protein</topology>
    </subcellularLocation>
    <text>Uniform peripheral location, with partial enrichment at cell poles.</text>
</comment>
<comment type="disruption phenotype">
    <text evidence="3 4">Cells are shorter in a single mutant, while triple envC-nlpD-mepM disruptions have defects in septation and cell separation and form long filaments (15-fold longer) and further yet by the quadruple disruption mutant (envC-nlpD-mepM-ygeR, over 21-fold longer). Quadruple mutants are less sensitive to ampicillin lysis (PubMed:19525345). A triple mepS-mepH-mepM mutant is inviable, whereas a double mepS-mepM will grow on a nutrient-poor medium but not on a rich medium, suggesting the 3 endopeptidases are functionally redundant in vivo. Depletion experiments of the double or triple mutants lead to cell lysis, as well as significantly decreased incorporation of mDAP into peptidoglycan sacculi and increased amounts of the enzyme's substrate (Tetra-Tetra-anhydro muropeptide) (PubMed:23062283).</text>
</comment>
<comment type="similarity">
    <text evidence="5">Belongs to the peptidase M23B family.</text>
</comment>
<comment type="sequence caution" evidence="5">
    <conflict type="erroneous initiation">
        <sequence resource="EMBL-CDS" id="AAA81029"/>
    </conflict>
    <text>Truncated N-terminus.</text>
</comment>
<reference key="1">
    <citation type="journal article" date="1996" name="DNA Res.">
        <title>A 460-kb DNA sequence of the Escherichia coli K-12 genome corresponding to the 40.1-50.0 min region on the linkage map.</title>
        <authorList>
            <person name="Itoh T."/>
            <person name="Aiba H."/>
            <person name="Baba T."/>
            <person name="Fujita K."/>
            <person name="Hayashi K."/>
            <person name="Inada T."/>
            <person name="Isono K."/>
            <person name="Kasai H."/>
            <person name="Kimura S."/>
            <person name="Kitakawa M."/>
            <person name="Kitagawa M."/>
            <person name="Makino K."/>
            <person name="Miki T."/>
            <person name="Mizobuchi K."/>
            <person name="Mori H."/>
            <person name="Mori T."/>
            <person name="Motomura K."/>
            <person name="Nakade S."/>
            <person name="Nakamura Y."/>
            <person name="Nashimoto H."/>
            <person name="Nishio Y."/>
            <person name="Oshima T."/>
            <person name="Saito N."/>
            <person name="Sampei G."/>
            <person name="Seki Y."/>
            <person name="Sivasundaram S."/>
            <person name="Tagami H."/>
            <person name="Takeda J."/>
            <person name="Takemoto K."/>
            <person name="Wada C."/>
            <person name="Yamamoto Y."/>
            <person name="Horiuchi T."/>
        </authorList>
    </citation>
    <scope>NUCLEOTIDE SEQUENCE [LARGE SCALE GENOMIC DNA]</scope>
    <source>
        <strain>K12 / W3110 / ATCC 27325 / DSM 5911</strain>
    </source>
</reference>
<reference key="2">
    <citation type="journal article" date="1997" name="Science">
        <title>The complete genome sequence of Escherichia coli K-12.</title>
        <authorList>
            <person name="Blattner F.R."/>
            <person name="Plunkett G. III"/>
            <person name="Bloch C.A."/>
            <person name="Perna N.T."/>
            <person name="Burland V."/>
            <person name="Riley M."/>
            <person name="Collado-Vides J."/>
            <person name="Glasner J.D."/>
            <person name="Rode C.K."/>
            <person name="Mayhew G.F."/>
            <person name="Gregor J."/>
            <person name="Davis N.W."/>
            <person name="Kirkpatrick H.A."/>
            <person name="Goeden M.A."/>
            <person name="Rose D.J."/>
            <person name="Mau B."/>
            <person name="Shao Y."/>
        </authorList>
    </citation>
    <scope>NUCLEOTIDE SEQUENCE [LARGE SCALE GENOMIC DNA]</scope>
    <source>
        <strain>K12 / MG1655 / ATCC 47076</strain>
    </source>
</reference>
<reference key="3">
    <citation type="journal article" date="2006" name="Mol. Syst. Biol.">
        <title>Highly accurate genome sequences of Escherichia coli K-12 strains MG1655 and W3110.</title>
        <authorList>
            <person name="Hayashi K."/>
            <person name="Morooka N."/>
            <person name="Yamamoto Y."/>
            <person name="Fujita K."/>
            <person name="Isono K."/>
            <person name="Choi S."/>
            <person name="Ohtsubo E."/>
            <person name="Baba T."/>
            <person name="Wanner B.L."/>
            <person name="Mori H."/>
            <person name="Horiuchi T."/>
        </authorList>
    </citation>
    <scope>NUCLEOTIDE SEQUENCE [LARGE SCALE GENOMIC DNA]</scope>
    <source>
        <strain>K12 / W3110 / ATCC 27325 / DSM 5911</strain>
    </source>
</reference>
<reference key="4">
    <citation type="submission" date="1995-10" db="EMBL/GenBank/DDBJ databases">
        <authorList>
            <person name="Robison K."/>
            <person name="O'Keeffe T."/>
            <person name="Church G.M."/>
        </authorList>
    </citation>
    <scope>NUCLEOTIDE SEQUENCE [GENOMIC DNA] OF 1-182</scope>
    <source>
        <strain>K12 / EMG2</strain>
    </source>
</reference>
<reference key="5">
    <citation type="journal article" date="1992" name="J. Bacteriol.">
        <title>Isolation and characterization of the Escherichia coli msbB gene, a multicopy suppressor of null mutations in the high-temperature requirement gene htrB.</title>
        <authorList>
            <person name="Karow M.L."/>
            <person name="Georgopoulos C."/>
        </authorList>
    </citation>
    <scope>NUCLEOTIDE SEQUENCE [GENOMIC DNA] OF 149-440</scope>
    <source>
        <strain>K12 / W3110 / ATCC 27325 / DSM 5911</strain>
    </source>
</reference>
<reference key="6">
    <citation type="journal article" date="2009" name="J. Bacteriol.">
        <title>LytM-domain factors are required for daughter cell separation and rapid ampicillin-induced lysis in Escherichia coli.</title>
        <authorList>
            <person name="Uehara T."/>
            <person name="Dinh T."/>
            <person name="Bernhardt T.G."/>
        </authorList>
    </citation>
    <scope>POSSIBLE SUBCELLULAR LOCATION</scope>
    <scope>DISRUPTION PHENOTYPE</scope>
    <source>
        <strain>K12 / MG1655 / TB28</strain>
    </source>
</reference>
<reference key="7">
    <citation type="journal article" date="2012" name="Mol. Microbiol.">
        <title>Three redundant murein endopeptidases catalyse an essential cleavage step in peptidoglycan synthesis of Escherichia coli K12.</title>
        <authorList>
            <person name="Singh S.K."/>
            <person name="SaiSree L."/>
            <person name="Amrutha R.N."/>
            <person name="Reddy M."/>
        </authorList>
    </citation>
    <scope>FUNCTION AS A MUREIN DD-ENDOPEPTIDASE</scope>
    <scope>COFACTOR</scope>
    <scope>DISRUPTION PHENOTYPE</scope>
    <source>
        <strain>K12</strain>
    </source>
</reference>
<gene>
    <name type="primary">mepM</name>
    <name type="synonym">yebA</name>
    <name type="ordered locus">b1856</name>
    <name type="ordered locus">JW5304</name>
</gene>
<feature type="chain" id="PRO_0000026826" description="Murein DD-endopeptidase MepM">
    <location>
        <begin position="1"/>
        <end position="440"/>
    </location>
</feature>
<feature type="topological domain" description="Cytoplasmic" evidence="1">
    <location>
        <begin position="1"/>
        <end position="20"/>
    </location>
</feature>
<feature type="transmembrane region" description="Helical" evidence="1">
    <location>
        <begin position="21"/>
        <end position="40"/>
    </location>
</feature>
<feature type="topological domain" description="Periplasmic" evidence="1">
    <location>
        <begin position="41"/>
        <end position="440"/>
    </location>
</feature>
<feature type="domain" description="LysM" evidence="2">
    <location>
        <begin position="96"/>
        <end position="141"/>
    </location>
</feature>
<feature type="binding site" evidence="1">
    <location>
        <position position="314"/>
    </location>
    <ligand>
        <name>Zn(2+)</name>
        <dbReference type="ChEBI" id="CHEBI:29105"/>
    </ligand>
</feature>
<feature type="sequence conflict" description="In Ref. 4; AAA81029." evidence="5" ref="4">
    <original>A</original>
    <variation>P</variation>
    <location>
        <position position="90"/>
    </location>
</feature>
<feature type="sequence conflict" description="In Ref. 4; AAA81029." evidence="5" ref="4">
    <original>A</original>
    <variation>T</variation>
    <location>
        <position position="93"/>
    </location>
</feature>
<feature type="sequence conflict" description="In Ref. 4; AAA81029." evidence="5" ref="4">
    <original>T</original>
    <variation>S</variation>
    <location>
        <position position="121"/>
    </location>
</feature>
<accession>P0AFS9</accession>
<accession>O07981</accession>
<accession>P24204</accession>
<accession>P76283</accession>